<keyword id="KW-0007">Acetylation</keyword>
<keyword id="KW-0025">Alternative splicing</keyword>
<keyword id="KW-0053">Apoptosis</keyword>
<keyword id="KW-0130">Cell adhesion</keyword>
<keyword id="KW-0963">Cytoplasm</keyword>
<keyword id="KW-0225">Disease variant</keyword>
<keyword id="KW-0887">Epilepsy</keyword>
<keyword id="KW-0539">Nucleus</keyword>
<keyword id="KW-1267">Proteomics identification</keyword>
<keyword id="KW-1185">Reference proteome</keyword>
<keyword id="KW-0691">RNA editing</keyword>
<keyword id="KW-0770">Synapse</keyword>
<keyword id="KW-0771">Synaptosome</keyword>
<feature type="chain" id="PRO_0000279709" description="Cytoplasmic FMR1-interacting protein 2">
    <location>
        <begin position="1"/>
        <end position="1278"/>
    </location>
</feature>
<feature type="modified residue" description="N6-acetyllysine" evidence="19">
    <location>
        <position position="1062"/>
    </location>
</feature>
<feature type="splice variant" id="VSP_052349" description="In isoform 2." evidence="11 12 13">
    <location>
        <begin position="558"/>
        <end position="582"/>
    </location>
</feature>
<feature type="sequence variant" id="VAR_080817" description="In DEE65; dbSNP:rs1131692231." evidence="10">
    <original>R</original>
    <variation>C</variation>
    <location>
        <position position="87"/>
    </location>
</feature>
<feature type="sequence variant" id="VAR_080818" description="In DEE65; dbSNP:rs1554108163." evidence="10">
    <original>R</original>
    <variation>L</variation>
    <location>
        <position position="87"/>
    </location>
</feature>
<feature type="sequence variant" id="VAR_080819" description="In DEE65; dbSNP:rs1554108163." evidence="10">
    <original>R</original>
    <variation>P</variation>
    <location>
        <position position="87"/>
    </location>
</feature>
<feature type="sequence variant" id="VAR_030953" description="In RNA edited version; dbSNP:rs3207362." evidence="7">
    <original>K</original>
    <variation>E</variation>
    <location>
        <position position="320"/>
    </location>
</feature>
<feature type="sequence conflict" description="In Ref. 8; AAH11762." evidence="14" ref="8">
    <original>I</original>
    <variation>T</variation>
    <location>
        <position position="796"/>
    </location>
</feature>
<comment type="function">
    <text evidence="1 3 6 8">Involved in T-cell adhesion and p53/TP53-dependent induction of apoptosis. Does not bind RNA. As component of the WAVE1 complex, required for BDNF-NTRK2 endocytic trafficking and signaling from early endosomes (By similarity).</text>
</comment>
<comment type="subunit">
    <text evidence="1 6 9">Component of the WAVE1 complex composed of ABI2, CYFIP2, BRK1, NCKAP1 and WASF1/WAVE1. Interacts with FMR1, FXR1 and FXR2 (By similarity). Interacts with FMR1 isoform 6; the interaction occurs in a RNA-dependent manner (PubMed:24658146). Interacts with RAC1 (activated form) which causes the complex to dissociate, releasing activated WASF1 (PubMed:15048733). The complex can also be activated by NCK1 (PubMed:15048733). Interacts with SHANK3; the interaction mediates the association of SHANK3 with the WAVE1 complex (By similarity). Interacts with TMEM108 (via N-terminus); the interaction associates TMEM108 with the WAVE1 complex (By similarity).</text>
</comment>
<comment type="interaction">
    <interactant intactId="EBI-2433893">
        <id>Q96F07</id>
    </interactant>
    <interactant intactId="EBI-366305">
        <id>Q06787</id>
        <label>FMR1</label>
    </interactant>
    <organismsDiffer>false</organismsDiffer>
    <experiments>2</experiments>
</comment>
<comment type="subcellular location">
    <subcellularLocation>
        <location evidence="3 8">Cytoplasm</location>
    </subcellularLocation>
    <subcellularLocation>
        <location evidence="8">Nucleus</location>
    </subcellularLocation>
    <subcellularLocation>
        <location evidence="1">Cytoplasm</location>
        <location evidence="1">Perinuclear region</location>
    </subcellularLocation>
    <subcellularLocation>
        <location evidence="1">Synapse</location>
        <location evidence="1">Synaptosome</location>
    </subcellularLocation>
    <text evidence="1 8">Highly expressed in the perinuclear regionand enriched in synaptosomes (By similarity). Treatment with leptomycin-B triggers translocation to the nucleus (PubMed:17245118).</text>
</comment>
<comment type="alternative products">
    <event type="alternative splicing"/>
    <isoform>
        <id>Q96F07-1</id>
        <name>1</name>
        <sequence type="displayed"/>
    </isoform>
    <isoform>
        <id>Q96F07-2</id>
        <name evidence="3">2</name>
        <sequence type="described" ref="VSP_052349"/>
    </isoform>
</comment>
<comment type="tissue specificity">
    <text evidence="6">Expressed in T-cells. Increased expression is observed in CD4(+) T-lymphocytes from patients with multiple sclerosis (at protein level).</text>
</comment>
<comment type="induction">
    <text evidence="8">By p53/TP53.</text>
</comment>
<comment type="RNA editing">
    <location>
        <position position="320" evidence="4 5 7"/>
    </location>
    <text evidence="7">Partially edited. Editing appears to be brain-specific.</text>
</comment>
<comment type="disease" evidence="10">
    <disease id="DI-05270">
        <name>Developmental and epileptic encephalopathy 65</name>
        <acronym>DEE65</acronym>
        <description>A form of epileptic encephalopathy, a heterogeneous group of severe early-onset epilepsies characterized by refractory seizures, neurodevelopmental impairment, and poor prognosis. Development is normal prior to seizure onset, after which cognitive and motor delays become apparent. DEE65 is an autosomal dominant form characterized by onset of intractable seizures usually in the first 6 months of life and severe to profound psychomotor developmental delay.</description>
        <dbReference type="MIM" id="618008"/>
    </disease>
    <text>The disease is caused by variants affecting the gene represented in this entry.</text>
</comment>
<comment type="similarity">
    <text evidence="2">Belongs to the CYFIP family.</text>
</comment>
<comment type="sequence caution" evidence="14">
    <conflict type="erroneous initiation">
        <sequence resource="EMBL-CDS" id="BAA86482"/>
    </conflict>
    <text>Extended N-terminus.</text>
</comment>
<comment type="sequence caution" evidence="14">
    <conflict type="erroneous initiation">
        <sequence resource="EMBL-CDS" id="BAD97324"/>
    </conflict>
    <text>Extended N-terminus.</text>
</comment>
<evidence type="ECO:0000250" key="1">
    <source>
        <dbReference type="UniProtKB" id="Q5SQX6"/>
    </source>
</evidence>
<evidence type="ECO:0000255" key="2"/>
<evidence type="ECO:0000269" key="3">
    <source>
    </source>
</evidence>
<evidence type="ECO:0000269" key="4">
    <source>
    </source>
</evidence>
<evidence type="ECO:0000269" key="5">
    <source>
    </source>
</evidence>
<evidence type="ECO:0000269" key="6">
    <source>
    </source>
</evidence>
<evidence type="ECO:0000269" key="7">
    <source>
    </source>
</evidence>
<evidence type="ECO:0000269" key="8">
    <source>
    </source>
</evidence>
<evidence type="ECO:0000269" key="9">
    <source>
    </source>
</evidence>
<evidence type="ECO:0000269" key="10">
    <source>
    </source>
</evidence>
<evidence type="ECO:0000303" key="11">
    <source>
    </source>
</evidence>
<evidence type="ECO:0000303" key="12">
    <source>
    </source>
</evidence>
<evidence type="ECO:0000303" key="13">
    <source>
    </source>
</evidence>
<evidence type="ECO:0000305" key="14"/>
<evidence type="ECO:0000312" key="15">
    <source>
        <dbReference type="EMBL" id="AAD45723.1"/>
    </source>
</evidence>
<evidence type="ECO:0000312" key="16">
    <source>
        <dbReference type="EMBL" id="AAH11762.1"/>
    </source>
</evidence>
<evidence type="ECO:0000312" key="17">
    <source>
        <dbReference type="EMBL" id="BAD97324.1"/>
    </source>
</evidence>
<evidence type="ECO:0000312" key="18">
    <source>
        <dbReference type="EMBL" id="CAB66484.1"/>
    </source>
</evidence>
<evidence type="ECO:0007744" key="19">
    <source>
    </source>
</evidence>
<reference evidence="14 15" key="1">
    <citation type="journal article" date="1999" name="EMBO J.">
        <title>Increased apoptosis induction by 121F mutant p53.</title>
        <authorList>
            <person name="Saller E."/>
            <person name="Tom E."/>
            <person name="Brunori M."/>
            <person name="Otter M."/>
            <person name="Estreicher A."/>
            <person name="Mack D.H."/>
            <person name="Iggo R."/>
        </authorList>
    </citation>
    <scope>NUCLEOTIDE SEQUENCE [MRNA] (ISOFORM 2)</scope>
    <scope>FUNCTION</scope>
    <scope>SUBCELLULAR LOCATION</scope>
</reference>
<reference key="2">
    <citation type="journal article" date="1999" name="DNA Res.">
        <title>Characterization of cDNA clones selected by the GeneMark analysis from size-fractionated cDNA libraries from human brain.</title>
        <authorList>
            <person name="Hirosawa M."/>
            <person name="Nagase T."/>
            <person name="Ishikawa K."/>
            <person name="Kikuno R."/>
            <person name="Nomura N."/>
            <person name="Ohara O."/>
        </authorList>
    </citation>
    <scope>NUCLEOTIDE SEQUENCE [LARGE SCALE MRNA] (ISOFORM 1)</scope>
    <scope>RNA EDITING OF POSITION 320</scope>
    <source>
        <tissue>Brain</tissue>
    </source>
</reference>
<reference evidence="14 18" key="3">
    <citation type="submission" date="2007-02" db="EMBL/GenBank/DDBJ databases">
        <authorList>
            <person name="Ohara O."/>
            <person name="Nagase T."/>
            <person name="Kikuno R."/>
        </authorList>
    </citation>
    <scope>SEQUENCE REVISION</scope>
</reference>
<reference key="4">
    <citation type="journal article" date="2001" name="Genome Res.">
        <title>Towards a catalog of human genes and proteins: sequencing and analysis of 500 novel complete protein coding human cDNAs.</title>
        <authorList>
            <person name="Wiemann S."/>
            <person name="Weil B."/>
            <person name="Wellenreuther R."/>
            <person name="Gassenhuber J."/>
            <person name="Glassl S."/>
            <person name="Ansorge W."/>
            <person name="Boecher M."/>
            <person name="Bloecker H."/>
            <person name="Bauersachs S."/>
            <person name="Blum H."/>
            <person name="Lauber J."/>
            <person name="Duesterhoeft A."/>
            <person name="Beyer A."/>
            <person name="Koehrer K."/>
            <person name="Strack N."/>
            <person name="Mewes H.-W."/>
            <person name="Ottenwaelder B."/>
            <person name="Obermaier B."/>
            <person name="Tampe J."/>
            <person name="Heubner D."/>
            <person name="Wambutt R."/>
            <person name="Korn B."/>
            <person name="Klein M."/>
            <person name="Poustka A."/>
        </authorList>
    </citation>
    <scope>NUCLEOTIDE SEQUENCE [LARGE SCALE MRNA] (ISOFORM 2)</scope>
    <scope>RNA EDITING OF POSITION 320</scope>
    <source>
        <tissue>Amygdala</tissue>
    </source>
</reference>
<reference evidence="14 18" key="5">
    <citation type="submission" date="2005-04" db="EMBL/GenBank/DDBJ databases">
        <authorList>
            <person name="Totoki Y."/>
            <person name="Toyoda A."/>
            <person name="Takeda T."/>
            <person name="Sakaki Y."/>
            <person name="Tanaka A."/>
            <person name="Yokoyama S."/>
        </authorList>
    </citation>
    <scope>NUCLEOTIDE SEQUENCE [LARGE SCALE MRNA] (ISOFORM 1)</scope>
    <source>
        <tissue evidence="17">Brain</tissue>
    </source>
</reference>
<reference key="6">
    <citation type="journal article" date="2004" name="Nature">
        <title>The DNA sequence and comparative analysis of human chromosome 5.</title>
        <authorList>
            <person name="Schmutz J."/>
            <person name="Martin J."/>
            <person name="Terry A."/>
            <person name="Couronne O."/>
            <person name="Grimwood J."/>
            <person name="Lowry S."/>
            <person name="Gordon L.A."/>
            <person name="Scott D."/>
            <person name="Xie G."/>
            <person name="Huang W."/>
            <person name="Hellsten U."/>
            <person name="Tran-Gyamfi M."/>
            <person name="She X."/>
            <person name="Prabhakar S."/>
            <person name="Aerts A."/>
            <person name="Altherr M."/>
            <person name="Bajorek E."/>
            <person name="Black S."/>
            <person name="Branscomb E."/>
            <person name="Caoile C."/>
            <person name="Challacombe J.F."/>
            <person name="Chan Y.M."/>
            <person name="Denys M."/>
            <person name="Detter J.C."/>
            <person name="Escobar J."/>
            <person name="Flowers D."/>
            <person name="Fotopulos D."/>
            <person name="Glavina T."/>
            <person name="Gomez M."/>
            <person name="Gonzales E."/>
            <person name="Goodstein D."/>
            <person name="Grigoriev I."/>
            <person name="Groza M."/>
            <person name="Hammon N."/>
            <person name="Hawkins T."/>
            <person name="Haydu L."/>
            <person name="Israni S."/>
            <person name="Jett J."/>
            <person name="Kadner K."/>
            <person name="Kimball H."/>
            <person name="Kobayashi A."/>
            <person name="Lopez F."/>
            <person name="Lou Y."/>
            <person name="Martinez D."/>
            <person name="Medina C."/>
            <person name="Morgan J."/>
            <person name="Nandkeshwar R."/>
            <person name="Noonan J.P."/>
            <person name="Pitluck S."/>
            <person name="Pollard M."/>
            <person name="Predki P."/>
            <person name="Priest J."/>
            <person name="Ramirez L."/>
            <person name="Retterer J."/>
            <person name="Rodriguez A."/>
            <person name="Rogers S."/>
            <person name="Salamov A."/>
            <person name="Salazar A."/>
            <person name="Thayer N."/>
            <person name="Tice H."/>
            <person name="Tsai M."/>
            <person name="Ustaszewska A."/>
            <person name="Vo N."/>
            <person name="Wheeler J."/>
            <person name="Wu K."/>
            <person name="Yang J."/>
            <person name="Dickson M."/>
            <person name="Cheng J.-F."/>
            <person name="Eichler E.E."/>
            <person name="Olsen A."/>
            <person name="Pennacchio L.A."/>
            <person name="Rokhsar D.S."/>
            <person name="Richardson P."/>
            <person name="Lucas S.M."/>
            <person name="Myers R.M."/>
            <person name="Rubin E.M."/>
        </authorList>
    </citation>
    <scope>NUCLEOTIDE SEQUENCE [LARGE SCALE GENOMIC DNA]</scope>
</reference>
<reference evidence="14 18" key="7">
    <citation type="submission" date="2005-09" db="EMBL/GenBank/DDBJ databases">
        <authorList>
            <person name="Mural R.J."/>
            <person name="Istrail S."/>
            <person name="Sutton G.G."/>
            <person name="Florea L."/>
            <person name="Halpern A.L."/>
            <person name="Mobarry C.M."/>
            <person name="Lippert R."/>
            <person name="Walenz B."/>
            <person name="Shatkay H."/>
            <person name="Dew I."/>
            <person name="Miller J.R."/>
            <person name="Flanigan M.J."/>
            <person name="Edwards N.J."/>
            <person name="Bolanos R."/>
            <person name="Fasulo D."/>
            <person name="Halldorsson B.V."/>
            <person name="Hannenhalli S."/>
            <person name="Turner R."/>
            <person name="Yooseph S."/>
            <person name="Lu F."/>
            <person name="Nusskern D.R."/>
            <person name="Shue B.C."/>
            <person name="Zheng X.H."/>
            <person name="Zhong F."/>
            <person name="Delcher A.L."/>
            <person name="Huson D.H."/>
            <person name="Kravitz S.A."/>
            <person name="Mouchard L."/>
            <person name="Reinert K."/>
            <person name="Remington K.A."/>
            <person name="Clark A.G."/>
            <person name="Waterman M.S."/>
            <person name="Eichler E.E."/>
            <person name="Adams M.D."/>
            <person name="Hunkapiller M.W."/>
            <person name="Myers E.W."/>
            <person name="Venter J.C."/>
        </authorList>
    </citation>
    <scope>NUCLEOTIDE SEQUENCE [LARGE SCALE GENOMIC DNA]</scope>
</reference>
<reference evidence="14 16" key="8">
    <citation type="journal article" date="2004" name="Genome Res.">
        <title>The status, quality, and expansion of the NIH full-length cDNA project: the Mammalian Gene Collection (MGC).</title>
        <authorList>
            <consortium name="The MGC Project Team"/>
        </authorList>
    </citation>
    <scope>NUCLEOTIDE SEQUENCE [LARGE SCALE MRNA] (ISOFORM 2)</scope>
    <source>
        <tissue evidence="16">Lymph</tissue>
    </source>
</reference>
<reference evidence="14" key="9">
    <citation type="journal article" date="2004" name="Eur. J. Immunol.">
        <title>CYFIP2 is highly abundant in CD4+ cells from multiple sclerosis patients and is involved in T cell adhesion.</title>
        <authorList>
            <person name="Mayne M."/>
            <person name="Moffatt T."/>
            <person name="Kong H."/>
            <person name="McLaren P.J."/>
            <person name="Fowke K.R."/>
            <person name="Becker K.G."/>
            <person name="Namaka M."/>
            <person name="Schenck A."/>
            <person name="Bardoni B."/>
            <person name="Bernstein C.N."/>
            <person name="Melanson M."/>
        </authorList>
    </citation>
    <scope>FUNCTION</scope>
    <scope>INTERACTION WITH RAC1</scope>
    <scope>TISSUE SPECIFICITY</scope>
</reference>
<reference evidence="14" key="10">
    <citation type="journal article" date="2005" name="Nucleic Acids Res.">
        <title>Evolutionarily conserved human targets of adenosine to inosine RNA editing.</title>
        <authorList>
            <person name="Levanon E.Y."/>
            <person name="Hallegger M."/>
            <person name="Kinar Y."/>
            <person name="Shemesh R."/>
            <person name="Djinovic-Carugo K."/>
            <person name="Rechavi G."/>
            <person name="Jantsch M.F."/>
            <person name="Eisenberg E."/>
        </authorList>
    </citation>
    <scope>RNA EDITING OF POSITION 320</scope>
</reference>
<reference evidence="14" key="11">
    <citation type="journal article" date="2007" name="Cell Cycle">
        <title>CYFIP2, a direct p53 target, is leptomycin-B sensitive.</title>
        <authorList>
            <person name="Jackson R.S. II"/>
            <person name="Cho Y.-J."/>
            <person name="Stein S."/>
            <person name="Liang P."/>
        </authorList>
    </citation>
    <scope>FUNCTION</scope>
    <scope>SUBCELLULAR LOCATION</scope>
    <scope>INDUCTION</scope>
</reference>
<reference key="12">
    <citation type="journal article" date="2009" name="Science">
        <title>Lysine acetylation targets protein complexes and co-regulates major cellular functions.</title>
        <authorList>
            <person name="Choudhary C."/>
            <person name="Kumar C."/>
            <person name="Gnad F."/>
            <person name="Nielsen M.L."/>
            <person name="Rehman M."/>
            <person name="Walther T.C."/>
            <person name="Olsen J.V."/>
            <person name="Mann M."/>
        </authorList>
    </citation>
    <scope>ACETYLATION [LARGE SCALE ANALYSIS] AT LYS-1062</scope>
    <scope>IDENTIFICATION BY MASS SPECTROMETRY [LARGE SCALE ANALYSIS]</scope>
</reference>
<reference key="13">
    <citation type="journal article" date="2011" name="BMC Syst. Biol.">
        <title>Initial characterization of the human central proteome.</title>
        <authorList>
            <person name="Burkard T.R."/>
            <person name="Planyavsky M."/>
            <person name="Kaupe I."/>
            <person name="Breitwieser F.P."/>
            <person name="Buerckstuemmer T."/>
            <person name="Bennett K.L."/>
            <person name="Superti-Furga G."/>
            <person name="Colinge J."/>
        </authorList>
    </citation>
    <scope>IDENTIFICATION BY MASS SPECTROMETRY [LARGE SCALE ANALYSIS]</scope>
</reference>
<reference key="14">
    <citation type="journal article" date="2014" name="PLoS ONE">
        <title>Subcellular fractionation and localization studies reveal a direct interaction of the fragile X mental retardation protein (FMRP) with nucleolin.</title>
        <authorList>
            <person name="Taha M.S."/>
            <person name="Nouri K."/>
            <person name="Milroy L.G."/>
            <person name="Moll J.M."/>
            <person name="Herrmann C."/>
            <person name="Brunsveld L."/>
            <person name="Piekorz R.P."/>
            <person name="Ahmadian M.R."/>
        </authorList>
    </citation>
    <scope>INTERACTION WITH FMR1</scope>
</reference>
<reference key="15">
    <citation type="journal article" date="2018" name="Ann. Neurol.">
        <title>De novo hotspot variants in CYFIP2 cause early-onset epileptic encephalopathy.</title>
        <authorList>
            <person name="Nakashima M."/>
            <person name="Kato M."/>
            <person name="Aoto K."/>
            <person name="Shiina M."/>
            <person name="Belal H."/>
            <person name="Mukaida S."/>
            <person name="Kumada S."/>
            <person name="Sato A."/>
            <person name="Zerem A."/>
            <person name="Lerman-Sagie T."/>
            <person name="Lev D."/>
            <person name="Leong H.Y."/>
            <person name="Tsurusaki Y."/>
            <person name="Mizuguchi T."/>
            <person name="Miyatake S."/>
            <person name="Miyake N."/>
            <person name="Ogata K."/>
            <person name="Saitsu H."/>
            <person name="Matsumoto N."/>
        </authorList>
    </citation>
    <scope>INVOLVEMENT IN DEE65</scope>
    <scope>VARIANTS DEE65 CYS-87; LEU-87 AND PRO-87</scope>
</reference>
<dbReference type="EMBL" id="AF160973">
    <property type="protein sequence ID" value="AAD45723.1"/>
    <property type="molecule type" value="mRNA"/>
</dbReference>
<dbReference type="EMBL" id="AB032994">
    <property type="protein sequence ID" value="BAA86482.2"/>
    <property type="status" value="ALT_INIT"/>
    <property type="molecule type" value="mRNA"/>
</dbReference>
<dbReference type="EMBL" id="AL136549">
    <property type="protein sequence ID" value="CAB66484.1"/>
    <property type="molecule type" value="mRNA"/>
</dbReference>
<dbReference type="EMBL" id="AK223604">
    <property type="protein sequence ID" value="BAD97324.1"/>
    <property type="status" value="ALT_INIT"/>
    <property type="molecule type" value="mRNA"/>
</dbReference>
<dbReference type="EMBL" id="AC008676">
    <property type="status" value="NOT_ANNOTATED_CDS"/>
    <property type="molecule type" value="Genomic_DNA"/>
</dbReference>
<dbReference type="EMBL" id="AC009185">
    <property type="status" value="NOT_ANNOTATED_CDS"/>
    <property type="molecule type" value="Genomic_DNA"/>
</dbReference>
<dbReference type="EMBL" id="AC016571">
    <property type="status" value="NOT_ANNOTATED_CDS"/>
    <property type="molecule type" value="Genomic_DNA"/>
</dbReference>
<dbReference type="EMBL" id="CH471062">
    <property type="protein sequence ID" value="EAW61604.1"/>
    <property type="molecule type" value="Genomic_DNA"/>
</dbReference>
<dbReference type="EMBL" id="CH471062">
    <property type="protein sequence ID" value="EAW61605.1"/>
    <property type="molecule type" value="Genomic_DNA"/>
</dbReference>
<dbReference type="EMBL" id="CH471062">
    <property type="protein sequence ID" value="EAW61606.1"/>
    <property type="molecule type" value="Genomic_DNA"/>
</dbReference>
<dbReference type="EMBL" id="BC011762">
    <property type="protein sequence ID" value="AAH11762.1"/>
    <property type="molecule type" value="mRNA"/>
</dbReference>
<dbReference type="CCDS" id="CCDS75364.1">
    <molecule id="Q96F07-2"/>
</dbReference>
<dbReference type="CCDS" id="CCDS78077.1">
    <molecule id="Q96F07-1"/>
</dbReference>
<dbReference type="PIR" id="T46248">
    <property type="entry name" value="T46248"/>
</dbReference>
<dbReference type="RefSeq" id="NP_001032410.1">
    <molecule id="Q96F07-2"/>
    <property type="nucleotide sequence ID" value="NM_001037333.3"/>
</dbReference>
<dbReference type="RefSeq" id="NP_001278650.1">
    <property type="nucleotide sequence ID" value="NM_001291721.1"/>
</dbReference>
<dbReference type="RefSeq" id="NP_001278651.1">
    <molecule id="Q96F07-1"/>
    <property type="nucleotide sequence ID" value="NM_001291722.2"/>
</dbReference>
<dbReference type="RefSeq" id="NP_055191.2">
    <molecule id="Q96F07-2"/>
    <property type="nucleotide sequence ID" value="NM_014376.4"/>
</dbReference>
<dbReference type="RefSeq" id="XP_011532818.1">
    <molecule id="Q96F07-2"/>
    <property type="nucleotide sequence ID" value="XM_011534516.4"/>
</dbReference>
<dbReference type="RefSeq" id="XP_016864830.1">
    <property type="nucleotide sequence ID" value="XM_017009341.1"/>
</dbReference>
<dbReference type="RefSeq" id="XP_047273056.1">
    <molecule id="Q96F07-2"/>
    <property type="nucleotide sequence ID" value="XM_047417100.1"/>
</dbReference>
<dbReference type="RefSeq" id="XP_054208351.1">
    <molecule id="Q96F07-2"/>
    <property type="nucleotide sequence ID" value="XM_054352376.1"/>
</dbReference>
<dbReference type="SMR" id="Q96F07"/>
<dbReference type="BioGRID" id="117945">
    <property type="interactions" value="178"/>
</dbReference>
<dbReference type="FunCoup" id="Q96F07">
    <property type="interactions" value="1306"/>
</dbReference>
<dbReference type="IntAct" id="Q96F07">
    <property type="interactions" value="90"/>
</dbReference>
<dbReference type="MINT" id="Q96F07"/>
<dbReference type="STRING" id="9606.ENSP00000479719"/>
<dbReference type="GlyCosmos" id="Q96F07">
    <property type="glycosylation" value="1 site, 1 glycan"/>
</dbReference>
<dbReference type="GlyGen" id="Q96F07">
    <property type="glycosylation" value="2 sites, 1 O-linked glycan (2 sites)"/>
</dbReference>
<dbReference type="iPTMnet" id="Q96F07"/>
<dbReference type="MetOSite" id="Q96F07"/>
<dbReference type="PhosphoSitePlus" id="Q96F07"/>
<dbReference type="SwissPalm" id="Q96F07"/>
<dbReference type="BioMuta" id="CYFIP2"/>
<dbReference type="DMDM" id="134034199"/>
<dbReference type="jPOST" id="Q96F07"/>
<dbReference type="MassIVE" id="Q96F07"/>
<dbReference type="PaxDb" id="9606-ENSP00000444645"/>
<dbReference type="PeptideAtlas" id="Q96F07"/>
<dbReference type="ProteomicsDB" id="76481">
    <molecule id="Q96F07-1"/>
</dbReference>
<dbReference type="ProteomicsDB" id="76482">
    <molecule id="Q96F07-2"/>
</dbReference>
<dbReference type="Pumba" id="Q96F07"/>
<dbReference type="Antibodypedia" id="28408">
    <property type="antibodies" value="141 antibodies from 27 providers"/>
</dbReference>
<dbReference type="DNASU" id="26999"/>
<dbReference type="Ensembl" id="ENST00000616178.4">
    <molecule id="Q96F07-1"/>
    <property type="protein sequence ID" value="ENSP00000479719.1"/>
    <property type="gene ID" value="ENSG00000055163.21"/>
</dbReference>
<dbReference type="Ensembl" id="ENST00000618329.4">
    <molecule id="Q96F07-2"/>
    <property type="protein sequence ID" value="ENSP00000484819.1"/>
    <property type="gene ID" value="ENSG00000055163.21"/>
</dbReference>
<dbReference type="Ensembl" id="ENST00000620254.5">
    <molecule id="Q96F07-2"/>
    <property type="protein sequence ID" value="ENSP00000479968.1"/>
    <property type="gene ID" value="ENSG00000055163.21"/>
</dbReference>
<dbReference type="GeneID" id="26999"/>
<dbReference type="KEGG" id="hsa:26999"/>
<dbReference type="MANE-Select" id="ENST00000620254.5">
    <molecule id="Q96F07-2"/>
    <property type="protein sequence ID" value="ENSP00000479968.1"/>
    <property type="RefSeq nucleotide sequence ID" value="NM_001037333.3"/>
    <property type="RefSeq protein sequence ID" value="NP_001032410.1"/>
</dbReference>
<dbReference type="UCSC" id="uc003lwt.5">
    <molecule id="Q96F07-1"/>
    <property type="organism name" value="human"/>
</dbReference>
<dbReference type="AGR" id="HGNC:13760"/>
<dbReference type="CTD" id="26999"/>
<dbReference type="DisGeNET" id="26999"/>
<dbReference type="GeneCards" id="CYFIP2"/>
<dbReference type="HGNC" id="HGNC:13760">
    <property type="gene designation" value="CYFIP2"/>
</dbReference>
<dbReference type="HPA" id="ENSG00000055163">
    <property type="expression patterns" value="Tissue enhanced (brain, kidney)"/>
</dbReference>
<dbReference type="MalaCards" id="CYFIP2"/>
<dbReference type="MIM" id="606323">
    <property type="type" value="gene"/>
</dbReference>
<dbReference type="MIM" id="618008">
    <property type="type" value="phenotype"/>
</dbReference>
<dbReference type="neXtProt" id="NX_Q96F07"/>
<dbReference type="OpenTargets" id="ENSG00000055163"/>
<dbReference type="Orphanet" id="442835">
    <property type="disease" value="Non-specific early-onset epileptic encephalopathy"/>
</dbReference>
<dbReference type="PharmGKB" id="PA38368"/>
<dbReference type="VEuPathDB" id="HostDB:ENSG00000055163"/>
<dbReference type="eggNOG" id="KOG3534">
    <property type="taxonomic scope" value="Eukaryota"/>
</dbReference>
<dbReference type="GeneTree" id="ENSGT00500000044831"/>
<dbReference type="HOGENOM" id="CLU_002688_2_1_1"/>
<dbReference type="InParanoid" id="Q96F07"/>
<dbReference type="OMA" id="DQPNRVE"/>
<dbReference type="OrthoDB" id="10265867at2759"/>
<dbReference type="PAN-GO" id="Q96F07">
    <property type="GO annotations" value="3 GO annotations based on evolutionary models"/>
</dbReference>
<dbReference type="PhylomeDB" id="Q96F07"/>
<dbReference type="PathwayCommons" id="Q96F07"/>
<dbReference type="Reactome" id="R-HSA-2029482">
    <property type="pathway name" value="Regulation of actin dynamics for phagocytic cup formation"/>
</dbReference>
<dbReference type="Reactome" id="R-HSA-4420097">
    <property type="pathway name" value="VEGFA-VEGFR2 Pathway"/>
</dbReference>
<dbReference type="Reactome" id="R-HSA-5663213">
    <property type="pathway name" value="RHO GTPases Activate WASPs and WAVEs"/>
</dbReference>
<dbReference type="Reactome" id="R-HSA-9013149">
    <property type="pathway name" value="RAC1 GTPase cycle"/>
</dbReference>
<dbReference type="Reactome" id="R-HSA-9664422">
    <property type="pathway name" value="FCGR3A-mediated phagocytosis"/>
</dbReference>
<dbReference type="SignaLink" id="Q96F07"/>
<dbReference type="BioGRID-ORCS" id="26999">
    <property type="hits" value="14 hits in 360 CRISPR screens"/>
</dbReference>
<dbReference type="CD-CODE" id="DEE660B4">
    <property type="entry name" value="Stress granule"/>
</dbReference>
<dbReference type="CD-CODE" id="FB4E32DD">
    <property type="entry name" value="Presynaptic clusters and postsynaptic densities"/>
</dbReference>
<dbReference type="ChiTaRS" id="CYFIP2">
    <property type="organism name" value="human"/>
</dbReference>
<dbReference type="GeneWiki" id="CYFIP2"/>
<dbReference type="GenomeRNAi" id="26999"/>
<dbReference type="Pharos" id="Q96F07">
    <property type="development level" value="Tbio"/>
</dbReference>
<dbReference type="PRO" id="PR:Q96F07"/>
<dbReference type="Proteomes" id="UP000005640">
    <property type="component" value="Chromosome 5"/>
</dbReference>
<dbReference type="RNAct" id="Q96F07">
    <property type="molecule type" value="protein"/>
</dbReference>
<dbReference type="Bgee" id="ENSG00000055163">
    <property type="expression patterns" value="Expressed in renal medulla and 209 other cell types or tissues"/>
</dbReference>
<dbReference type="ExpressionAtlas" id="Q96F07">
    <property type="expression patterns" value="baseline and differential"/>
</dbReference>
<dbReference type="GO" id="GO:0005737">
    <property type="term" value="C:cytoplasm"/>
    <property type="evidence" value="ECO:0000314"/>
    <property type="project" value="MGI"/>
</dbReference>
<dbReference type="GO" id="GO:0005829">
    <property type="term" value="C:cytosol"/>
    <property type="evidence" value="ECO:0000304"/>
    <property type="project" value="Reactome"/>
</dbReference>
<dbReference type="GO" id="GO:0070062">
    <property type="term" value="C:extracellular exosome"/>
    <property type="evidence" value="ECO:0007005"/>
    <property type="project" value="UniProtKB"/>
</dbReference>
<dbReference type="GO" id="GO:0016020">
    <property type="term" value="C:membrane"/>
    <property type="evidence" value="ECO:0007005"/>
    <property type="project" value="UniProtKB"/>
</dbReference>
<dbReference type="GO" id="GO:0043005">
    <property type="term" value="C:neuron projection"/>
    <property type="evidence" value="ECO:0000318"/>
    <property type="project" value="GO_Central"/>
</dbReference>
<dbReference type="GO" id="GO:0005634">
    <property type="term" value="C:nucleus"/>
    <property type="evidence" value="ECO:0007669"/>
    <property type="project" value="UniProtKB-SubCell"/>
</dbReference>
<dbReference type="GO" id="GO:0048471">
    <property type="term" value="C:perinuclear region of cytoplasm"/>
    <property type="evidence" value="ECO:0000314"/>
    <property type="project" value="UniProtKB"/>
</dbReference>
<dbReference type="GO" id="GO:0031209">
    <property type="term" value="C:SCAR complex"/>
    <property type="evidence" value="ECO:0000314"/>
    <property type="project" value="ARUK-UCL"/>
</dbReference>
<dbReference type="GO" id="GO:0045202">
    <property type="term" value="C:synapse"/>
    <property type="evidence" value="ECO:0000314"/>
    <property type="project" value="MGI"/>
</dbReference>
<dbReference type="GO" id="GO:0031267">
    <property type="term" value="F:small GTPase binding"/>
    <property type="evidence" value="ECO:0007669"/>
    <property type="project" value="InterPro"/>
</dbReference>
<dbReference type="GO" id="GO:0006915">
    <property type="term" value="P:apoptotic process"/>
    <property type="evidence" value="ECO:0000314"/>
    <property type="project" value="UniProtKB"/>
</dbReference>
<dbReference type="GO" id="GO:0007411">
    <property type="term" value="P:axon guidance"/>
    <property type="evidence" value="ECO:0000318"/>
    <property type="project" value="GO_Central"/>
</dbReference>
<dbReference type="GO" id="GO:0000902">
    <property type="term" value="P:cell morphogenesis"/>
    <property type="evidence" value="ECO:0000318"/>
    <property type="project" value="GO_Central"/>
</dbReference>
<dbReference type="GO" id="GO:0030031">
    <property type="term" value="P:cell projection assembly"/>
    <property type="evidence" value="ECO:0000318"/>
    <property type="project" value="GO_Central"/>
</dbReference>
<dbReference type="GO" id="GO:0098609">
    <property type="term" value="P:cell-cell adhesion"/>
    <property type="evidence" value="ECO:0000314"/>
    <property type="project" value="UniProtKB"/>
</dbReference>
<dbReference type="GO" id="GO:0097484">
    <property type="term" value="P:dendrite extension"/>
    <property type="evidence" value="ECO:0007669"/>
    <property type="project" value="Ensembl"/>
</dbReference>
<dbReference type="GO" id="GO:0051388">
    <property type="term" value="P:positive regulation of neurotrophin TRK receptor signaling pathway"/>
    <property type="evidence" value="ECO:0007669"/>
    <property type="project" value="Ensembl"/>
</dbReference>
<dbReference type="GO" id="GO:0045862">
    <property type="term" value="P:positive regulation of proteolysis"/>
    <property type="evidence" value="ECO:0000314"/>
    <property type="project" value="BHF-UCL"/>
</dbReference>
<dbReference type="GO" id="GO:0030833">
    <property type="term" value="P:regulation of actin filament polymerization"/>
    <property type="evidence" value="ECO:0007669"/>
    <property type="project" value="InterPro"/>
</dbReference>
<dbReference type="GO" id="GO:0150052">
    <property type="term" value="P:regulation of postsynapse assembly"/>
    <property type="evidence" value="ECO:0000314"/>
    <property type="project" value="SynGO"/>
</dbReference>
<dbReference type="InterPro" id="IPR009828">
    <property type="entry name" value="CYRIA/CYRIB_Rac1-bd"/>
</dbReference>
<dbReference type="InterPro" id="IPR008081">
    <property type="entry name" value="Cytoplasmic_FMR1-int"/>
</dbReference>
<dbReference type="PANTHER" id="PTHR12195">
    <property type="entry name" value="CYTOPLASMIC FMR1-INTERACTING PROTEIN-RELATED"/>
    <property type="match status" value="1"/>
</dbReference>
<dbReference type="Pfam" id="PF07159">
    <property type="entry name" value="CYRIA-B_Rac1-bd"/>
    <property type="match status" value="1"/>
</dbReference>
<dbReference type="Pfam" id="PF05994">
    <property type="entry name" value="FragX_IP"/>
    <property type="match status" value="2"/>
</dbReference>
<dbReference type="PIRSF" id="PIRSF008153">
    <property type="entry name" value="FMR1_interacting"/>
    <property type="match status" value="1"/>
</dbReference>
<dbReference type="PRINTS" id="PR01698">
    <property type="entry name" value="CYTOFMRPINTP"/>
</dbReference>
<gene>
    <name evidence="16" type="primary">CYFIP2</name>
    <name type="synonym">KIAA1168</name>
    <name evidence="15" type="synonym">PIR121</name>
</gene>
<accession>Q96F07</accession>
<accession>A6NLT2</accession>
<accession>D3DQJ3</accession>
<accession>Q53EN5</accession>
<accession>Q9NTK4</accession>
<accession>Q9ULQ2</accession>
<accession>Q9UN29</accession>
<proteinExistence type="evidence at protein level"/>
<sequence length="1278" mass="148399">MTTHVTLEDALSNVDLLEELPLPDQQPCIEPPPSSIMYQANFDTNFEDRNAFVTGIARYIEQATVHSSMNEMLEEGHEYAVMLYTWRSCSRAIPQVKCNEQPNRVEIYEKTVEVLEPEVTKLMKFMYFQRKAIERFCSEVKRLCHAERRKDFVSEAYLLTLGKFINMFAVLDELKNMKCSVKNDHSAYKRAAQFLRKMADPQSIQESQNLSMFLANHNRITQCLHQQLEVIPGYEELLADIVNICVDYYENKMYLTPSEKHMLLKVMGFGLYLMDGNVSNIYKLDAKKRINLSKIDKFFKQLQVVPLFGDMQIELARYIKTSAHYEENKSKWTCTQSSISPQYNICEQMVQIRDDHIRFISELARYSNSEVVTGSGLDSQKSDEEYRELFDLALRGLQLLSKWSAHVMEVYSWKLVHPTDKFCNKDCPGTAEEYERATRYNYTSEEKFAFVEVIAMIKGLQVLMGRMESVFNQAIRNTIYAALQDFAQVTLREPLRQAVRKKKNVLISVLQAIRKTICDWEGGREPPNDPCLRGEKDPKGGFDIKVPRRAVGPSSTQACQWSPRALFHPTGGTQGRRGCRSLLYMVRTMLESLIADKSGSKKTLRSSLDGPIVLAIEDFHKQSFFFTHLLNISEALQQCCDLSQLWFREFFLELTMGRRIQFPIEMSMPWILTDHILETKEPSMMEYVLYPLDLYNDSAYYALTKFKKQFLYDEIEAEVNLCFDQFVYKLADQIFAYYKAMAGSVLLDKRFRAECKNYGVIIPYPPSNRYETLLKQRHVQLLGRSIDLNRLITQRISAAMYKSLDQAISRFESEDLTSIVELEWLLEINRLTHRLLCKHMTLDSFDAMFREANHNVSAPYGRITLHVFWELNFDFLPNYCYNGSTNRFVRTAIPFTQEPQRDKPANVQPYYLYGSKPLNIAYSHIYSSYRNFVGPPHFKTICRLLGYQGIAVVMEELLKIVKSLLQGTILQYVKTLIEVMPKICRLPRHEYGSPGILEFFHHQLKDIIEYAELKTDVFQSLREVGNAILFCLLIEQALSQEEVCDLLHAAPFQNILPRVYIKEGERLEVRMKRLEAKYAPLHLVPLIERLGTPQQIAIAREGDLLTKERLCCGLSMFEVILTRIRSYLQDPIWRGPPPTNGVMHVDECVEFHRLWSAMQFVYCIPVGTNEFTAEQCFGDGLNWAGCSIIVLLGQQRRFDLFDFCYHLLKVQRQDGKDEIIKNVPLKKMADRIRKYQILNNEVFAILNKYMKSVETDSSTVEHVRCFQPPIHQSLATTC</sequence>
<protein>
    <recommendedName>
        <fullName>Cytoplasmic FMR1-interacting protein 2</fullName>
    </recommendedName>
    <alternativeName>
        <fullName>p53-inducible protein 121</fullName>
    </alternativeName>
</protein>
<organism>
    <name type="scientific">Homo sapiens</name>
    <name type="common">Human</name>
    <dbReference type="NCBI Taxonomy" id="9606"/>
    <lineage>
        <taxon>Eukaryota</taxon>
        <taxon>Metazoa</taxon>
        <taxon>Chordata</taxon>
        <taxon>Craniata</taxon>
        <taxon>Vertebrata</taxon>
        <taxon>Euteleostomi</taxon>
        <taxon>Mammalia</taxon>
        <taxon>Eutheria</taxon>
        <taxon>Euarchontoglires</taxon>
        <taxon>Primates</taxon>
        <taxon>Haplorrhini</taxon>
        <taxon>Catarrhini</taxon>
        <taxon>Hominidae</taxon>
        <taxon>Homo</taxon>
    </lineage>
</organism>
<name>CYFP2_HUMAN</name>